<proteinExistence type="inferred from homology"/>
<comment type="function">
    <text evidence="1">Transfers a GMP moiety from GTP to Mo-molybdopterin (Mo-MPT) cofactor (Moco or molybdenum cofactor) to form Mo-molybdopterin guanine dinucleotide (Mo-MGD) cofactor.</text>
</comment>
<comment type="catalytic activity">
    <reaction>
        <text>Mo-molybdopterin + GTP + H(+) = Mo-molybdopterin guanine dinucleotide + diphosphate</text>
        <dbReference type="Rhea" id="RHEA:34243"/>
        <dbReference type="ChEBI" id="CHEBI:15378"/>
        <dbReference type="ChEBI" id="CHEBI:33019"/>
        <dbReference type="ChEBI" id="CHEBI:37565"/>
        <dbReference type="ChEBI" id="CHEBI:71302"/>
        <dbReference type="ChEBI" id="CHEBI:71310"/>
        <dbReference type="EC" id="2.7.7.77"/>
    </reaction>
</comment>
<comment type="cofactor">
    <cofactor evidence="1">
        <name>Mg(2+)</name>
        <dbReference type="ChEBI" id="CHEBI:18420"/>
    </cofactor>
</comment>
<comment type="subcellular location">
    <subcellularLocation>
        <location evidence="1">Cytoplasm</location>
    </subcellularLocation>
</comment>
<comment type="domain">
    <text evidence="1">The N-terminal domain determines nucleotide recognition and specific binding, while the C-terminal domain determines the specific binding to the target protein.</text>
</comment>
<comment type="similarity">
    <text evidence="2">Belongs to the MobA family.</text>
</comment>
<protein>
    <recommendedName>
        <fullName>Probable molybdenum cofactor guanylyltransferase</fullName>
        <shortName>MoCo guanylyltransferase</shortName>
        <ecNumber>2.7.7.77</ecNumber>
    </recommendedName>
    <alternativeName>
        <fullName>GTP:molybdopterin guanylyltransferase</fullName>
    </alternativeName>
    <alternativeName>
        <fullName>Mo-MPT guanylyltransferase</fullName>
    </alternativeName>
    <alternativeName>
        <fullName>Molybdopterin guanylyltransferase</fullName>
    </alternativeName>
    <alternativeName>
        <fullName>Molybdopterin-guanine dinucleotide synthase</fullName>
        <shortName>MGD synthase</shortName>
    </alternativeName>
</protein>
<name>NASC_HALMT</name>
<dbReference type="EC" id="2.7.7.77"/>
<dbReference type="EMBL" id="AJ621500">
    <property type="protein sequence ID" value="CAF19044.1"/>
    <property type="molecule type" value="Genomic_DNA"/>
</dbReference>
<dbReference type="EMBL" id="CP001868">
    <property type="protein sequence ID" value="AFK19696.1"/>
    <property type="molecule type" value="Genomic_DNA"/>
</dbReference>
<dbReference type="EMBL" id="AOLO01000009">
    <property type="protein sequence ID" value="EMA00018.1"/>
    <property type="molecule type" value="Genomic_DNA"/>
</dbReference>
<dbReference type="RefSeq" id="WP_004059342.1">
    <property type="nucleotide sequence ID" value="NC_017941.2"/>
</dbReference>
<dbReference type="SMR" id="I3R636"/>
<dbReference type="STRING" id="523841.HFX_2004"/>
<dbReference type="PaxDb" id="523841-HFX_2004"/>
<dbReference type="GeneID" id="40155086"/>
<dbReference type="KEGG" id="hme:HFX_2004"/>
<dbReference type="eggNOG" id="arCOG01872">
    <property type="taxonomic scope" value="Archaea"/>
</dbReference>
<dbReference type="HOGENOM" id="CLU_055597_2_1_2"/>
<dbReference type="OrthoDB" id="28434at2157"/>
<dbReference type="Proteomes" id="UP000006469">
    <property type="component" value="Chromosome"/>
</dbReference>
<dbReference type="Proteomes" id="UP000011603">
    <property type="component" value="Unassembled WGS sequence"/>
</dbReference>
<dbReference type="GO" id="GO:0005737">
    <property type="term" value="C:cytoplasm"/>
    <property type="evidence" value="ECO:0007669"/>
    <property type="project" value="UniProtKB-SubCell"/>
</dbReference>
<dbReference type="GO" id="GO:0005525">
    <property type="term" value="F:GTP binding"/>
    <property type="evidence" value="ECO:0007669"/>
    <property type="project" value="UniProtKB-UniRule"/>
</dbReference>
<dbReference type="GO" id="GO:0046872">
    <property type="term" value="F:metal ion binding"/>
    <property type="evidence" value="ECO:0007669"/>
    <property type="project" value="UniProtKB-KW"/>
</dbReference>
<dbReference type="GO" id="GO:0061603">
    <property type="term" value="F:molybdenum cofactor guanylyltransferase activity"/>
    <property type="evidence" value="ECO:0007669"/>
    <property type="project" value="UniProtKB-EC"/>
</dbReference>
<dbReference type="GO" id="GO:0006777">
    <property type="term" value="P:Mo-molybdopterin cofactor biosynthetic process"/>
    <property type="evidence" value="ECO:0007669"/>
    <property type="project" value="UniProtKB-KW"/>
</dbReference>
<dbReference type="CDD" id="cd02503">
    <property type="entry name" value="MobA"/>
    <property type="match status" value="1"/>
</dbReference>
<dbReference type="Gene3D" id="3.90.550.10">
    <property type="entry name" value="Spore Coat Polysaccharide Biosynthesis Protein SpsA, Chain A"/>
    <property type="match status" value="1"/>
</dbReference>
<dbReference type="HAMAP" id="MF_00316">
    <property type="entry name" value="MobA"/>
    <property type="match status" value="1"/>
</dbReference>
<dbReference type="InterPro" id="IPR025877">
    <property type="entry name" value="MobA-like_NTP_Trfase"/>
</dbReference>
<dbReference type="InterPro" id="IPR013482">
    <property type="entry name" value="Molybde_CF_guanTrfase"/>
</dbReference>
<dbReference type="InterPro" id="IPR029044">
    <property type="entry name" value="Nucleotide-diphossugar_trans"/>
</dbReference>
<dbReference type="PANTHER" id="PTHR19136">
    <property type="entry name" value="MOLYBDENUM COFACTOR GUANYLYLTRANSFERASE"/>
    <property type="match status" value="1"/>
</dbReference>
<dbReference type="PANTHER" id="PTHR19136:SF81">
    <property type="entry name" value="MOLYBDENUM COFACTOR GUANYLYLTRANSFERASE"/>
    <property type="match status" value="1"/>
</dbReference>
<dbReference type="Pfam" id="PF12804">
    <property type="entry name" value="NTP_transf_3"/>
    <property type="match status" value="1"/>
</dbReference>
<dbReference type="SUPFAM" id="SSF53448">
    <property type="entry name" value="Nucleotide-diphospho-sugar transferases"/>
    <property type="match status" value="1"/>
</dbReference>
<feature type="chain" id="PRO_0000428893" description="Probable molybdenum cofactor guanylyltransferase">
    <location>
        <begin position="1"/>
        <end position="210"/>
    </location>
</feature>
<feature type="binding site" evidence="1">
    <location>
        <begin position="18"/>
        <end position="20"/>
    </location>
    <ligand>
        <name>GTP</name>
        <dbReference type="ChEBI" id="CHEBI:37565"/>
    </ligand>
</feature>
<feature type="binding site" evidence="1">
    <location>
        <position position="31"/>
    </location>
    <ligand>
        <name>GTP</name>
        <dbReference type="ChEBI" id="CHEBI:37565"/>
    </ligand>
</feature>
<feature type="binding site" evidence="1">
    <location>
        <position position="59"/>
    </location>
    <ligand>
        <name>GTP</name>
        <dbReference type="ChEBI" id="CHEBI:37565"/>
    </ligand>
</feature>
<feature type="binding site" evidence="1">
    <location>
        <position position="86"/>
    </location>
    <ligand>
        <name>GTP</name>
        <dbReference type="ChEBI" id="CHEBI:37565"/>
    </ligand>
</feature>
<feature type="binding site" evidence="1">
    <location>
        <position position="111"/>
    </location>
    <ligand>
        <name>GTP</name>
        <dbReference type="ChEBI" id="CHEBI:37565"/>
    </ligand>
</feature>
<feature type="binding site" evidence="1">
    <location>
        <position position="111"/>
    </location>
    <ligand>
        <name>Mg(2+)</name>
        <dbReference type="ChEBI" id="CHEBI:18420"/>
    </ligand>
</feature>
<feature type="sequence conflict" description="In Ref. 1; CAF19044." evidence="2" ref="1">
    <original>DSHPD</original>
    <variation>TLTQN</variation>
    <location>
        <begin position="82"/>
        <end position="86"/>
    </location>
</feature>
<feature type="sequence conflict" description="In Ref. 1; CAF19044." evidence="2" ref="1">
    <original>NVLDGREVQAHA</original>
    <variation>TSWTGAKCRHTP</variation>
    <location>
        <begin position="178"/>
        <end position="189"/>
    </location>
</feature>
<keyword id="KW-0963">Cytoplasm</keyword>
<keyword id="KW-0342">GTP-binding</keyword>
<keyword id="KW-0460">Magnesium</keyword>
<keyword id="KW-0479">Metal-binding</keyword>
<keyword id="KW-0501">Molybdenum cofactor biosynthesis</keyword>
<keyword id="KW-0547">Nucleotide-binding</keyword>
<keyword id="KW-0808">Transferase</keyword>
<evidence type="ECO:0000250" key="1"/>
<evidence type="ECO:0000305" key="2"/>
<organism>
    <name type="scientific">Haloferax mediterranei (strain ATCC 33500 / DSM 1411 / JCM 8866 / NBRC 14739 / NCIMB 2177 / R-4)</name>
    <name type="common">Halobacterium mediterranei</name>
    <dbReference type="NCBI Taxonomy" id="523841"/>
    <lineage>
        <taxon>Archaea</taxon>
        <taxon>Methanobacteriati</taxon>
        <taxon>Methanobacteriota</taxon>
        <taxon>Stenosarchaea group</taxon>
        <taxon>Halobacteria</taxon>
        <taxon>Halobacteriales</taxon>
        <taxon>Haloferacaceae</taxon>
        <taxon>Haloferax</taxon>
    </lineage>
</organism>
<accession>I3R636</accession>
<accession>Q703N3</accession>
<reference key="1">
    <citation type="journal article" date="2005" name="Gene">
        <title>Identification and transcriptional analysis of nitrate assimilation genes in the halophilic archaeon Haloferax mediterranei.</title>
        <authorList>
            <person name="Lledo B."/>
            <person name="Marhuenda-Egea F.C."/>
            <person name="Martinez-Espinosa R.M."/>
            <person name="Bonete M.J."/>
        </authorList>
    </citation>
    <scope>NUCLEOTIDE SEQUENCE [GENOMIC DNA]</scope>
    <source>
        <strain>ATCC 33500 / DSM 1411 / JCM 8866 / NBRC 14739 / NCIMB 2177 / R-4</strain>
    </source>
</reference>
<reference key="2">
    <citation type="journal article" date="2012" name="J. Bacteriol.">
        <title>Complete genome sequence of the metabolically versatile halophilic archaeon Haloferax mediterranei, a poly(3-hydroxybutyrate-co-3-hydroxyvalerate) producer.</title>
        <authorList>
            <person name="Han J."/>
            <person name="Zhang F."/>
            <person name="Hou J."/>
            <person name="Liu X."/>
            <person name="Li M."/>
            <person name="Liu H."/>
            <person name="Cai L."/>
            <person name="Zhang B."/>
            <person name="Chen Y."/>
            <person name="Zhou J."/>
            <person name="Hu S."/>
            <person name="Xiang H."/>
        </authorList>
    </citation>
    <scope>NUCLEOTIDE SEQUENCE [LARGE SCALE GENOMIC DNA]</scope>
    <source>
        <strain>ATCC 33500 / DSM 1411 / JCM 8866 / NBRC 14739 / NCIMB 2177 / R-4</strain>
    </source>
</reference>
<reference key="3">
    <citation type="journal article" date="2014" name="PLoS Genet.">
        <title>Phylogenetically driven sequencing of extremely halophilic archaea reveals strategies for static and dynamic osmo-response.</title>
        <authorList>
            <person name="Becker E.A."/>
            <person name="Seitzer P.M."/>
            <person name="Tritt A."/>
            <person name="Larsen D."/>
            <person name="Krusor M."/>
            <person name="Yao A.I."/>
            <person name="Wu D."/>
            <person name="Madern D."/>
            <person name="Eisen J.A."/>
            <person name="Darling A.E."/>
            <person name="Facciotti M.T."/>
        </authorList>
    </citation>
    <scope>NUCLEOTIDE SEQUENCE [LARGE SCALE GENOMIC DNA]</scope>
    <source>
        <strain>ATCC 33500 / DSM 1411 / JCM 8866 / NBRC 14739 / NCIMB 2177 / R-4</strain>
    </source>
</reference>
<gene>
    <name type="primary">nasC</name>
    <name type="synonym">mobA</name>
    <name type="ordered locus">HFX_2004</name>
    <name type="ORF">C439_11798</name>
</gene>
<sequence>MAEQSSRNLDTGRAGIILAGGRSRRFDGIDKATAPVGGRPMIHRVAASLDPAVDELVINCRADQRDTFAAALSDFDVRFAEDSHPDHGPVFGLRTAVRASNAEYAAILPCDMPLVPTGFISHLFGRVQGGTGVIPSVSETPVPLPSVVHCRAGEVACTETIRAGSDRLKDVMSTLGVNVLDGREVQAHAGLDAFSNVNTIDDLRALSSRR</sequence>